<keyword id="KW-0007">Acetylation</keyword>
<keyword id="KW-0687">Ribonucleoprotein</keyword>
<keyword id="KW-0689">Ribosomal protein</keyword>
<keyword id="KW-0694">RNA-binding</keyword>
<keyword id="KW-0699">rRNA-binding</keyword>
<organism>
    <name type="scientific">Shigella boydii serotype 4 (strain Sb227)</name>
    <dbReference type="NCBI Taxonomy" id="300268"/>
    <lineage>
        <taxon>Bacteria</taxon>
        <taxon>Pseudomonadati</taxon>
        <taxon>Pseudomonadota</taxon>
        <taxon>Gammaproteobacteria</taxon>
        <taxon>Enterobacterales</taxon>
        <taxon>Enterobacteriaceae</taxon>
        <taxon>Shigella</taxon>
    </lineage>
</organism>
<comment type="function">
    <text evidence="1">One of the primary rRNA binding proteins. Required for association of the 30S and 50S subunits to form the 70S ribosome, for tRNA binding and peptide bond formation. It has been suggested to have peptidyltransferase activity; this is somewhat controversial. Makes several contacts with the 16S rRNA in the 70S ribosome.</text>
</comment>
<comment type="subunit">
    <text evidence="1">Part of the 50S ribosomal subunit. Forms a bridge to the 30S subunit in the 70S ribosome.</text>
</comment>
<comment type="similarity">
    <text evidence="1">Belongs to the universal ribosomal protein uL2 family.</text>
</comment>
<evidence type="ECO:0000255" key="1">
    <source>
        <dbReference type="HAMAP-Rule" id="MF_01320"/>
    </source>
</evidence>
<evidence type="ECO:0000256" key="2">
    <source>
        <dbReference type="SAM" id="MobiDB-lite"/>
    </source>
</evidence>
<evidence type="ECO:0000305" key="3"/>
<gene>
    <name evidence="1" type="primary">rplB</name>
    <name type="ordered locus">SBO_3311</name>
</gene>
<name>RL2_SHIBS</name>
<proteinExistence type="inferred from homology"/>
<reference key="1">
    <citation type="journal article" date="2005" name="Nucleic Acids Res.">
        <title>Genome dynamics and diversity of Shigella species, the etiologic agents of bacillary dysentery.</title>
        <authorList>
            <person name="Yang F."/>
            <person name="Yang J."/>
            <person name="Zhang X."/>
            <person name="Chen L."/>
            <person name="Jiang Y."/>
            <person name="Yan Y."/>
            <person name="Tang X."/>
            <person name="Wang J."/>
            <person name="Xiong Z."/>
            <person name="Dong J."/>
            <person name="Xue Y."/>
            <person name="Zhu Y."/>
            <person name="Xu X."/>
            <person name="Sun L."/>
            <person name="Chen S."/>
            <person name="Nie H."/>
            <person name="Peng J."/>
            <person name="Xu J."/>
            <person name="Wang Y."/>
            <person name="Yuan Z."/>
            <person name="Wen Y."/>
            <person name="Yao Z."/>
            <person name="Shen Y."/>
            <person name="Qiang B."/>
            <person name="Hou Y."/>
            <person name="Yu J."/>
            <person name="Jin Q."/>
        </authorList>
    </citation>
    <scope>NUCLEOTIDE SEQUENCE [LARGE SCALE GENOMIC DNA]</scope>
    <source>
        <strain>Sb227</strain>
    </source>
</reference>
<dbReference type="EMBL" id="CP000036">
    <property type="protein sequence ID" value="ABB67799.1"/>
    <property type="molecule type" value="Genomic_DNA"/>
</dbReference>
<dbReference type="RefSeq" id="WP_000301864.1">
    <property type="nucleotide sequence ID" value="NC_007613.1"/>
</dbReference>
<dbReference type="SMR" id="Q31VV9"/>
<dbReference type="GeneID" id="93778670"/>
<dbReference type="KEGG" id="sbo:SBO_3311"/>
<dbReference type="HOGENOM" id="CLU_036235_2_1_6"/>
<dbReference type="Proteomes" id="UP000007067">
    <property type="component" value="Chromosome"/>
</dbReference>
<dbReference type="GO" id="GO:0005829">
    <property type="term" value="C:cytosol"/>
    <property type="evidence" value="ECO:0007669"/>
    <property type="project" value="UniProtKB-ARBA"/>
</dbReference>
<dbReference type="GO" id="GO:0015934">
    <property type="term" value="C:large ribosomal subunit"/>
    <property type="evidence" value="ECO:0007669"/>
    <property type="project" value="InterPro"/>
</dbReference>
<dbReference type="GO" id="GO:0019843">
    <property type="term" value="F:rRNA binding"/>
    <property type="evidence" value="ECO:0007669"/>
    <property type="project" value="UniProtKB-UniRule"/>
</dbReference>
<dbReference type="GO" id="GO:0003735">
    <property type="term" value="F:structural constituent of ribosome"/>
    <property type="evidence" value="ECO:0007669"/>
    <property type="project" value="InterPro"/>
</dbReference>
<dbReference type="GO" id="GO:0016740">
    <property type="term" value="F:transferase activity"/>
    <property type="evidence" value="ECO:0007669"/>
    <property type="project" value="InterPro"/>
</dbReference>
<dbReference type="GO" id="GO:0002181">
    <property type="term" value="P:cytoplasmic translation"/>
    <property type="evidence" value="ECO:0007669"/>
    <property type="project" value="TreeGrafter"/>
</dbReference>
<dbReference type="FunFam" id="2.30.30.30:FF:000001">
    <property type="entry name" value="50S ribosomal protein L2"/>
    <property type="match status" value="1"/>
</dbReference>
<dbReference type="FunFam" id="2.40.50.140:FF:000003">
    <property type="entry name" value="50S ribosomal protein L2"/>
    <property type="match status" value="1"/>
</dbReference>
<dbReference type="FunFam" id="4.10.950.10:FF:000001">
    <property type="entry name" value="50S ribosomal protein L2"/>
    <property type="match status" value="1"/>
</dbReference>
<dbReference type="Gene3D" id="2.30.30.30">
    <property type="match status" value="1"/>
</dbReference>
<dbReference type="Gene3D" id="2.40.50.140">
    <property type="entry name" value="Nucleic acid-binding proteins"/>
    <property type="match status" value="1"/>
</dbReference>
<dbReference type="Gene3D" id="4.10.950.10">
    <property type="entry name" value="Ribosomal protein L2, domain 3"/>
    <property type="match status" value="1"/>
</dbReference>
<dbReference type="HAMAP" id="MF_01320_B">
    <property type="entry name" value="Ribosomal_uL2_B"/>
    <property type="match status" value="1"/>
</dbReference>
<dbReference type="InterPro" id="IPR012340">
    <property type="entry name" value="NA-bd_OB-fold"/>
</dbReference>
<dbReference type="InterPro" id="IPR014722">
    <property type="entry name" value="Rib_uL2_dom2"/>
</dbReference>
<dbReference type="InterPro" id="IPR002171">
    <property type="entry name" value="Ribosomal_uL2"/>
</dbReference>
<dbReference type="InterPro" id="IPR005880">
    <property type="entry name" value="Ribosomal_uL2_bac/org-type"/>
</dbReference>
<dbReference type="InterPro" id="IPR022669">
    <property type="entry name" value="Ribosomal_uL2_C"/>
</dbReference>
<dbReference type="InterPro" id="IPR022671">
    <property type="entry name" value="Ribosomal_uL2_CS"/>
</dbReference>
<dbReference type="InterPro" id="IPR014726">
    <property type="entry name" value="Ribosomal_uL2_dom3"/>
</dbReference>
<dbReference type="InterPro" id="IPR022666">
    <property type="entry name" value="Ribosomal_uL2_RNA-bd_dom"/>
</dbReference>
<dbReference type="InterPro" id="IPR008991">
    <property type="entry name" value="Translation_prot_SH3-like_sf"/>
</dbReference>
<dbReference type="NCBIfam" id="TIGR01171">
    <property type="entry name" value="rplB_bact"/>
    <property type="match status" value="1"/>
</dbReference>
<dbReference type="PANTHER" id="PTHR13691:SF5">
    <property type="entry name" value="LARGE RIBOSOMAL SUBUNIT PROTEIN UL2M"/>
    <property type="match status" value="1"/>
</dbReference>
<dbReference type="PANTHER" id="PTHR13691">
    <property type="entry name" value="RIBOSOMAL PROTEIN L2"/>
    <property type="match status" value="1"/>
</dbReference>
<dbReference type="Pfam" id="PF00181">
    <property type="entry name" value="Ribosomal_L2"/>
    <property type="match status" value="1"/>
</dbReference>
<dbReference type="Pfam" id="PF03947">
    <property type="entry name" value="Ribosomal_L2_C"/>
    <property type="match status" value="1"/>
</dbReference>
<dbReference type="PIRSF" id="PIRSF002158">
    <property type="entry name" value="Ribosomal_L2"/>
    <property type="match status" value="1"/>
</dbReference>
<dbReference type="SMART" id="SM01383">
    <property type="entry name" value="Ribosomal_L2"/>
    <property type="match status" value="1"/>
</dbReference>
<dbReference type="SMART" id="SM01382">
    <property type="entry name" value="Ribosomal_L2_C"/>
    <property type="match status" value="1"/>
</dbReference>
<dbReference type="SUPFAM" id="SSF50249">
    <property type="entry name" value="Nucleic acid-binding proteins"/>
    <property type="match status" value="1"/>
</dbReference>
<dbReference type="SUPFAM" id="SSF50104">
    <property type="entry name" value="Translation proteins SH3-like domain"/>
    <property type="match status" value="1"/>
</dbReference>
<dbReference type="PROSITE" id="PS00467">
    <property type="entry name" value="RIBOSOMAL_L2"/>
    <property type="match status" value="1"/>
</dbReference>
<sequence length="273" mass="29860">MAVVKCKPTSPGRRHVVKVVNPELHKGKPFAPLLEKNSKSGGRNNNGRITTRHIGGGHKQAYRIVDFKRNKDGIPAVVERLEYDPNRSANIALVLYKDGERRYILAPKGLKAGDQIQSGVDAAIKPGNTLPMRNIPVGSTVHNVEMKPGKGGQLARSAGTYVQIVARDGAYVTLRLRSGEMRKVEADCRATLGEVGNAEHMLRVLGKAGAARWRGVRPTVRGTAMNPVDHPHGGGEGRNFGKHPVTPWGVQTKGKKTRSNKRTDKFIVRRRSK</sequence>
<accession>Q31VV9</accession>
<feature type="chain" id="PRO_0000237240" description="Large ribosomal subunit protein uL2">
    <location>
        <begin position="1"/>
        <end position="273"/>
    </location>
</feature>
<feature type="region of interest" description="Disordered" evidence="2">
    <location>
        <begin position="28"/>
        <end position="53"/>
    </location>
</feature>
<feature type="region of interest" description="Disordered" evidence="2">
    <location>
        <begin position="221"/>
        <end position="273"/>
    </location>
</feature>
<feature type="compositionally biased region" description="Low complexity" evidence="2">
    <location>
        <begin position="39"/>
        <end position="48"/>
    </location>
</feature>
<feature type="modified residue" description="N6-acetyllysine" evidence="1">
    <location>
        <position position="242"/>
    </location>
</feature>
<protein>
    <recommendedName>
        <fullName evidence="1">Large ribosomal subunit protein uL2</fullName>
    </recommendedName>
    <alternativeName>
        <fullName evidence="3">50S ribosomal protein L2</fullName>
    </alternativeName>
</protein>